<name>JDP2_MOUSE</name>
<protein>
    <recommendedName>
        <fullName>Jun dimerization protein 2</fullName>
    </recommendedName>
</protein>
<sequence>MMPGQIPDPSVTAGSLPGLGPLTGLPSSALTTEELKYADIRNIGAMIAPLHFLEVKLGKRPQPVKSELDEEEERRKRRREKNKVAAARCRNKKKERTEFLQRESERLELMNAELKTQIEELKLERQQLILMLNRHRPTCIVRTDSVRTPESEGNPLLEQLDKK</sequence>
<gene>
    <name type="primary">Jdp2</name>
    <name type="synonym">Jundm2</name>
</gene>
<proteinExistence type="evidence at protein level"/>
<feature type="chain" id="PRO_0000331131" description="Jun dimerization protein 2">
    <location>
        <begin position="1"/>
        <end position="163"/>
    </location>
</feature>
<feature type="domain" description="bZIP" evidence="3">
    <location>
        <begin position="72"/>
        <end position="135"/>
    </location>
</feature>
<feature type="region of interest" description="Disordered" evidence="4">
    <location>
        <begin position="1"/>
        <end position="20"/>
    </location>
</feature>
<feature type="region of interest" description="Disordered" evidence="4">
    <location>
        <begin position="59"/>
        <end position="89"/>
    </location>
</feature>
<feature type="region of interest" description="Basic motif" evidence="3">
    <location>
        <begin position="74"/>
        <end position="96"/>
    </location>
</feature>
<feature type="region of interest" description="Leucine-zipper" evidence="3">
    <location>
        <begin position="100"/>
        <end position="128"/>
    </location>
</feature>
<feature type="modified residue" description="Phosphothreonine; by MAPK8" evidence="6 9">
    <location>
        <position position="148"/>
    </location>
</feature>
<feature type="cross-link" description="Glycyl lysine isopeptide (Lys-Gly) (interchain with G-Cter in SUMO2)" evidence="2">
    <location>
        <position position="65"/>
    </location>
</feature>
<feature type="mutagenesis site" description="Blocks phosphorylation by MAPK8." evidence="6 9">
    <original>T</original>
    <variation>A</variation>
    <location>
        <position position="148"/>
    </location>
</feature>
<keyword id="KW-0238">DNA-binding</keyword>
<keyword id="KW-1017">Isopeptide bond</keyword>
<keyword id="KW-0539">Nucleus</keyword>
<keyword id="KW-0597">Phosphoprotein</keyword>
<keyword id="KW-1185">Reference proteome</keyword>
<keyword id="KW-0678">Repressor</keyword>
<keyword id="KW-0804">Transcription</keyword>
<keyword id="KW-0805">Transcription regulation</keyword>
<keyword id="KW-0832">Ubl conjugation</keyword>
<accession>P97875</accession>
<organism>
    <name type="scientific">Mus musculus</name>
    <name type="common">Mouse</name>
    <dbReference type="NCBI Taxonomy" id="10090"/>
    <lineage>
        <taxon>Eukaryota</taxon>
        <taxon>Metazoa</taxon>
        <taxon>Chordata</taxon>
        <taxon>Craniata</taxon>
        <taxon>Vertebrata</taxon>
        <taxon>Euteleostomi</taxon>
        <taxon>Mammalia</taxon>
        <taxon>Eutheria</taxon>
        <taxon>Euarchontoglires</taxon>
        <taxon>Glires</taxon>
        <taxon>Rodentia</taxon>
        <taxon>Myomorpha</taxon>
        <taxon>Muroidea</taxon>
        <taxon>Muridae</taxon>
        <taxon>Murinae</taxon>
        <taxon>Mus</taxon>
        <taxon>Mus</taxon>
    </lineage>
</organism>
<comment type="function">
    <text evidence="1 7 8">Component of the AP-1 transcription factor that represses transactivation mediated by the Jun family of proteins. Involved in a variety of transcriptional responses associated with AP-1, such as UV-induced apoptosis, cell differentiation, tumorigenesis and antitumogeneris. Can also function as a repressor by recruiting histone deacetylase 3/HDAC3 to the promoter region of JUN. May control transcription via direct regulation of the modification of histones and the assembly of chromatin (By similarity).</text>
</comment>
<comment type="subunit">
    <text evidence="1">Forms a homodimer or heterodimer with JUN, JUNB, JUND, CEBPG and ATF2 thereby inhibiting transactivation by JUN, ATF2 and CEBPG (By similarity). Binds multiple DNA elements such as cAMP-response element (CRE) and TPA response element (TRE) either as homodimer or heterodimer. Interacts with IRF2BP1 (By similarity).</text>
</comment>
<comment type="subcellular location">
    <subcellularLocation>
        <location evidence="10">Nucleus</location>
    </subcellularLocation>
</comment>
<comment type="tissue specificity">
    <text evidence="5">Ubiquitously expressed in all adult tissues tested as well in embryos.</text>
</comment>
<comment type="PTM">
    <text evidence="6 9">Phosphorylation of Thr-148 by MAPK8 in response to different stress conditions such as, UV irradiation, oxidatives stress and anisomycin treatments.</text>
</comment>
<comment type="PTM">
    <text evidence="1">Polyubiquitinated; probably by IRF2BP1.</text>
</comment>
<comment type="similarity">
    <text evidence="10">Belongs to the bZIP family. ATF subfamily.</text>
</comment>
<evidence type="ECO:0000250" key="1"/>
<evidence type="ECO:0000250" key="2">
    <source>
        <dbReference type="UniProtKB" id="Q8WYK2"/>
    </source>
</evidence>
<evidence type="ECO:0000255" key="3">
    <source>
        <dbReference type="PROSITE-ProRule" id="PRU00978"/>
    </source>
</evidence>
<evidence type="ECO:0000256" key="4">
    <source>
        <dbReference type="SAM" id="MobiDB-lite"/>
    </source>
</evidence>
<evidence type="ECO:0000269" key="5">
    <source>
    </source>
</evidence>
<evidence type="ECO:0000269" key="6">
    <source>
    </source>
</evidence>
<evidence type="ECO:0000269" key="7">
    <source>
    </source>
</evidence>
<evidence type="ECO:0000269" key="8">
    <source>
    </source>
</evidence>
<evidence type="ECO:0000269" key="9">
    <source>
    </source>
</evidence>
<evidence type="ECO:0000305" key="10"/>
<dbReference type="EMBL" id="AB077438">
    <property type="protein sequence ID" value="BAB83764.1"/>
    <property type="molecule type" value="mRNA"/>
</dbReference>
<dbReference type="EMBL" id="BC019780">
    <property type="protein sequence ID" value="AAH19780.1"/>
    <property type="molecule type" value="mRNA"/>
</dbReference>
<dbReference type="CCDS" id="CCDS26060.1"/>
<dbReference type="RefSeq" id="NP_001191981.1">
    <property type="nucleotide sequence ID" value="NM_001205052.2"/>
</dbReference>
<dbReference type="RefSeq" id="NP_001191982.1">
    <property type="nucleotide sequence ID" value="NM_001205053.2"/>
</dbReference>
<dbReference type="RefSeq" id="NP_001388195.1">
    <property type="nucleotide sequence ID" value="NM_001401266.1"/>
</dbReference>
<dbReference type="RefSeq" id="NP_112149.2">
    <property type="nucleotide sequence ID" value="NM_030887.2"/>
</dbReference>
<dbReference type="SMR" id="P97875"/>
<dbReference type="BioGRID" id="219888">
    <property type="interactions" value="15"/>
</dbReference>
<dbReference type="ELM" id="P97875"/>
<dbReference type="FunCoup" id="P97875">
    <property type="interactions" value="1335"/>
</dbReference>
<dbReference type="IntAct" id="P97875">
    <property type="interactions" value="9"/>
</dbReference>
<dbReference type="STRING" id="10090.ENSMUSP00000136823"/>
<dbReference type="iPTMnet" id="P97875"/>
<dbReference type="PhosphoSitePlus" id="P97875"/>
<dbReference type="PaxDb" id="10090-ENSMUSP00000059724"/>
<dbReference type="PeptideAtlas" id="P97875"/>
<dbReference type="ProteomicsDB" id="269234"/>
<dbReference type="Antibodypedia" id="25829">
    <property type="antibodies" value="126 antibodies from 23 providers"/>
</dbReference>
<dbReference type="DNASU" id="81703"/>
<dbReference type="Ensembl" id="ENSMUST00000050687.14">
    <property type="protein sequence ID" value="ENSMUSP00000059724.7"/>
    <property type="gene ID" value="ENSMUSG00000034271.17"/>
</dbReference>
<dbReference type="Ensembl" id="ENSMUST00000171754.3">
    <property type="protein sequence ID" value="ENSMUSP00000129985.3"/>
    <property type="gene ID" value="ENSMUSG00000034271.17"/>
</dbReference>
<dbReference type="Ensembl" id="ENSMUST00000177587.9">
    <property type="protein sequence ID" value="ENSMUSP00000136823.2"/>
    <property type="gene ID" value="ENSMUSG00000034271.17"/>
</dbReference>
<dbReference type="GeneID" id="81703"/>
<dbReference type="KEGG" id="mmu:81703"/>
<dbReference type="UCSC" id="uc007ohb.1">
    <property type="organism name" value="mouse"/>
</dbReference>
<dbReference type="AGR" id="MGI:1932093"/>
<dbReference type="CTD" id="122953"/>
<dbReference type="MGI" id="MGI:1932093">
    <property type="gene designation" value="Jdp2"/>
</dbReference>
<dbReference type="VEuPathDB" id="HostDB:ENSMUSG00000034271"/>
<dbReference type="eggNOG" id="KOG1414">
    <property type="taxonomic scope" value="Eukaryota"/>
</dbReference>
<dbReference type="GeneTree" id="ENSGT00940000155693"/>
<dbReference type="HOGENOM" id="CLU_088612_0_1_1"/>
<dbReference type="InParanoid" id="P97875"/>
<dbReference type="OMA" id="FKVGLMQ"/>
<dbReference type="OrthoDB" id="2596881at2759"/>
<dbReference type="PhylomeDB" id="P97875"/>
<dbReference type="TreeFam" id="TF326301"/>
<dbReference type="BioGRID-ORCS" id="81703">
    <property type="hits" value="3 hits in 79 CRISPR screens"/>
</dbReference>
<dbReference type="ChiTaRS" id="Jdp2">
    <property type="organism name" value="mouse"/>
</dbReference>
<dbReference type="PRO" id="PR:P97875"/>
<dbReference type="Proteomes" id="UP000000589">
    <property type="component" value="Chromosome 12"/>
</dbReference>
<dbReference type="RNAct" id="P97875">
    <property type="molecule type" value="protein"/>
</dbReference>
<dbReference type="Bgee" id="ENSMUSG00000034271">
    <property type="expression patterns" value="Expressed in granulocyte and 276 other cell types or tissues"/>
</dbReference>
<dbReference type="ExpressionAtlas" id="P97875">
    <property type="expression patterns" value="baseline and differential"/>
</dbReference>
<dbReference type="GO" id="GO:0005634">
    <property type="term" value="C:nucleus"/>
    <property type="evidence" value="ECO:0000314"/>
    <property type="project" value="MGI"/>
</dbReference>
<dbReference type="GO" id="GO:0035497">
    <property type="term" value="F:cAMP response element binding"/>
    <property type="evidence" value="ECO:0000314"/>
    <property type="project" value="MGI"/>
</dbReference>
<dbReference type="GO" id="GO:0003682">
    <property type="term" value="F:chromatin binding"/>
    <property type="evidence" value="ECO:0000314"/>
    <property type="project" value="MGI"/>
</dbReference>
<dbReference type="GO" id="GO:0003677">
    <property type="term" value="F:DNA binding"/>
    <property type="evidence" value="ECO:0000314"/>
    <property type="project" value="MGI"/>
</dbReference>
<dbReference type="GO" id="GO:0001227">
    <property type="term" value="F:DNA-binding transcription repressor activity, RNA polymerase II-specific"/>
    <property type="evidence" value="ECO:0000314"/>
    <property type="project" value="NTNU_SB"/>
</dbReference>
<dbReference type="GO" id="GO:0140713">
    <property type="term" value="F:histone chaperone activity"/>
    <property type="evidence" value="ECO:0000316"/>
    <property type="project" value="MGI"/>
</dbReference>
<dbReference type="GO" id="GO:0042826">
    <property type="term" value="F:histone deacetylase binding"/>
    <property type="evidence" value="ECO:0000353"/>
    <property type="project" value="MGI"/>
</dbReference>
<dbReference type="GO" id="GO:0043522">
    <property type="term" value="F:leucine zipper domain binding"/>
    <property type="evidence" value="ECO:0000353"/>
    <property type="project" value="MGI"/>
</dbReference>
<dbReference type="GO" id="GO:0046982">
    <property type="term" value="F:protein heterodimerization activity"/>
    <property type="evidence" value="ECO:0000353"/>
    <property type="project" value="MGI"/>
</dbReference>
<dbReference type="GO" id="GO:0042803">
    <property type="term" value="F:protein homodimerization activity"/>
    <property type="evidence" value="ECO:0000353"/>
    <property type="project" value="MGI"/>
</dbReference>
<dbReference type="GO" id="GO:0000978">
    <property type="term" value="F:RNA polymerase II cis-regulatory region sequence-specific DNA binding"/>
    <property type="evidence" value="ECO:0000314"/>
    <property type="project" value="NTNU_SB"/>
</dbReference>
<dbReference type="GO" id="GO:0006338">
    <property type="term" value="P:chromatin remodeling"/>
    <property type="evidence" value="ECO:0000316"/>
    <property type="project" value="MGI"/>
</dbReference>
<dbReference type="GO" id="GO:0045444">
    <property type="term" value="P:fat cell differentiation"/>
    <property type="evidence" value="ECO:0000314"/>
    <property type="project" value="MGI"/>
</dbReference>
<dbReference type="GO" id="GO:0045599">
    <property type="term" value="P:negative regulation of fat cell differentiation"/>
    <property type="evidence" value="ECO:0000314"/>
    <property type="project" value="MGI"/>
</dbReference>
<dbReference type="GO" id="GO:0000122">
    <property type="term" value="P:negative regulation of transcription by RNA polymerase II"/>
    <property type="evidence" value="ECO:0000314"/>
    <property type="project" value="NTNU_SB"/>
</dbReference>
<dbReference type="GO" id="GO:0006357">
    <property type="term" value="P:regulation of transcription by RNA polymerase II"/>
    <property type="evidence" value="ECO:0000314"/>
    <property type="project" value="MGI"/>
</dbReference>
<dbReference type="FunFam" id="1.20.5.170:FF:000006">
    <property type="entry name" value="fos-related antigen 2 isoform X1"/>
    <property type="match status" value="1"/>
</dbReference>
<dbReference type="Gene3D" id="1.20.5.170">
    <property type="match status" value="1"/>
</dbReference>
<dbReference type="InterPro" id="IPR000837">
    <property type="entry name" value="AP-1"/>
</dbReference>
<dbReference type="InterPro" id="IPR004827">
    <property type="entry name" value="bZIP"/>
</dbReference>
<dbReference type="InterPro" id="IPR046347">
    <property type="entry name" value="bZIP_sf"/>
</dbReference>
<dbReference type="PANTHER" id="PTHR23351">
    <property type="entry name" value="FOS TRANSCRIPTION FACTOR-RELATED"/>
    <property type="match status" value="1"/>
</dbReference>
<dbReference type="PANTHER" id="PTHR23351:SF10">
    <property type="entry name" value="JUN DIMERIZATION PROTEIN 2"/>
    <property type="match status" value="1"/>
</dbReference>
<dbReference type="Pfam" id="PF00170">
    <property type="entry name" value="bZIP_1"/>
    <property type="match status" value="1"/>
</dbReference>
<dbReference type="PRINTS" id="PR00042">
    <property type="entry name" value="LEUZIPPRFOS"/>
</dbReference>
<dbReference type="SMART" id="SM00338">
    <property type="entry name" value="BRLZ"/>
    <property type="match status" value="1"/>
</dbReference>
<dbReference type="SUPFAM" id="SSF57959">
    <property type="entry name" value="Leucine zipper domain"/>
    <property type="match status" value="1"/>
</dbReference>
<dbReference type="PROSITE" id="PS50217">
    <property type="entry name" value="BZIP"/>
    <property type="match status" value="1"/>
</dbReference>
<dbReference type="PROSITE" id="PS00036">
    <property type="entry name" value="BZIP_BASIC"/>
    <property type="match status" value="1"/>
</dbReference>
<reference key="1">
    <citation type="journal article" date="2003" name="J. Exp. Med.">
        <title>Jun dimerization protein 2 (JDP2), a member of the AP-1 family of transcription factor, mediates osteoclast differentiation induced by RANKL.</title>
        <authorList>
            <person name="Kawaida R."/>
            <person name="Ohtsuka T."/>
            <person name="Okutsu J."/>
            <person name="Takahashi T."/>
            <person name="Kadono Y."/>
            <person name="Oda H."/>
            <person name="Hikita A."/>
            <person name="Nakamura K."/>
            <person name="Tanaka S."/>
            <person name="Furukawa H."/>
        </authorList>
    </citation>
    <scope>NUCLEOTIDE SEQUENCE [MRNA]</scope>
    <scope>FUNCTION</scope>
</reference>
<reference key="2">
    <citation type="journal article" date="2004" name="Genome Res.">
        <title>The status, quality, and expansion of the NIH full-length cDNA project: the Mammalian Gene Collection (MGC).</title>
        <authorList>
            <consortium name="The MGC Project Team"/>
        </authorList>
    </citation>
    <scope>NUCLEOTIDE SEQUENCE [LARGE SCALE MRNA]</scope>
    <source>
        <strain>Czech II</strain>
        <tissue>Mammary tumor</tissue>
    </source>
</reference>
<reference key="3">
    <citation type="journal article" date="2001" name="FEBS Lett.">
        <title>Identification of mouse Jun dimerization protein 2 as a novel repressor of ATF-2.</title>
        <authorList>
            <person name="Jin C."/>
            <person name="Ugai H."/>
            <person name="Song J."/>
            <person name="Murata T."/>
            <person name="Nili F."/>
            <person name="Sun K."/>
            <person name="Horikoshi M."/>
            <person name="Yokoyama K.K."/>
        </authorList>
    </citation>
    <scope>TISSUE SPECIFICITY</scope>
    <scope>INTERACTION WITH ATF2</scope>
    <scope>DNA-BINDING</scope>
</reference>
<reference key="4">
    <citation type="journal article" date="2001" name="FEBS Lett.">
        <title>The AP-1 repressor, JDP2, is a bona fide substrate for the c-Jun N-terminal kinase.</title>
        <authorList>
            <person name="Katz S."/>
            <person name="Heinrich R."/>
            <person name="Aronheim A."/>
        </authorList>
    </citation>
    <scope>INTERACTION WITH ATF2</scope>
    <scope>PHOSPHORYLATION AT THR-148 BY MAPK8</scope>
    <scope>MUTAGENESIS OF THR-148</scope>
</reference>
<reference key="5">
    <citation type="journal article" date="2004" name="J. Biol. Chem.">
        <title>The c-Jun dimerization protein 2 inhibits cell transformation and acts as a tumor suppressor gene.</title>
        <authorList>
            <person name="Heinrich R."/>
            <person name="Livne E."/>
            <person name="Ben-Izhak O."/>
            <person name="Aronheim A."/>
        </authorList>
    </citation>
    <scope>FUNCTION</scope>
</reference>
<reference key="6">
    <citation type="journal article" date="2008" name="Anal. Biochem.">
        <title>Phosphorylation of two eukaryotic transcription factors, Jun dimerization protein 2 and activation transcription factor 2, in Escherichia coli by Jun N-terminal kinase 1.</title>
        <authorList>
            <person name="Murata T."/>
            <person name="Shinozuka Y."/>
            <person name="Obata Y."/>
            <person name="Yokoyama K.K."/>
        </authorList>
    </citation>
    <scope>INTERACTION WITH ATF2</scope>
    <scope>PHOSPHORYLATION AT THR-148 BY MAPK8/JNK1</scope>
    <scope>MUTAGENESIS OF THR-148</scope>
</reference>